<sequence>MEWSLTQNKLLAFHRLMRTDKPIGALLLLWPTLWALWVATPGVPQLWILAVFVAGVWLMRAAGCVVNDYADRKFDGHVKRTANRPLPSGAVTEKEARALFVVLVLISFLLVLTLNTMTILLSIAALALAWVYPFMKRYTHLPQVVLGAAFGWSIPMAFAAVSESVPLSCWLMFLANILWAVAYDTQYAMVDRDDDVKIGIKSTAILFGQYDKLIIGIFQIGVLALMAIIGELNGLGWGYYWSILVAGALFVYQQKLIANREREACFKAFMNNNYVGLVLFLGLAMSYWHF</sequence>
<protein>
    <recommendedName>
        <fullName evidence="1">4-hydroxybenzoate octaprenyltransferase</fullName>
        <ecNumber evidence="1">2.5.1.39</ecNumber>
    </recommendedName>
    <alternativeName>
        <fullName evidence="1">4-HB polyprenyltransferase</fullName>
    </alternativeName>
</protein>
<evidence type="ECO:0000255" key="1">
    <source>
        <dbReference type="HAMAP-Rule" id="MF_01635"/>
    </source>
</evidence>
<proteinExistence type="inferred from homology"/>
<feature type="chain" id="PRO_0000262793" description="4-hydroxybenzoate octaprenyltransferase">
    <location>
        <begin position="1"/>
        <end position="290"/>
    </location>
</feature>
<feature type="transmembrane region" description="Helical" evidence="1">
    <location>
        <begin position="23"/>
        <end position="43"/>
    </location>
</feature>
<feature type="transmembrane region" description="Helical" evidence="1">
    <location>
        <begin position="46"/>
        <end position="66"/>
    </location>
</feature>
<feature type="transmembrane region" description="Helical" evidence="1">
    <location>
        <begin position="99"/>
        <end position="119"/>
    </location>
</feature>
<feature type="transmembrane region" description="Helical" evidence="1">
    <location>
        <begin position="141"/>
        <end position="161"/>
    </location>
</feature>
<feature type="transmembrane region" description="Helical" evidence="1">
    <location>
        <begin position="163"/>
        <end position="183"/>
    </location>
</feature>
<feature type="transmembrane region" description="Helical" evidence="1">
    <location>
        <begin position="213"/>
        <end position="233"/>
    </location>
</feature>
<feature type="transmembrane region" description="Helical" evidence="1">
    <location>
        <begin position="234"/>
        <end position="254"/>
    </location>
</feature>
<feature type="transmembrane region" description="Helical" evidence="1">
    <location>
        <begin position="268"/>
        <end position="288"/>
    </location>
</feature>
<reference key="1">
    <citation type="journal article" date="2006" name="Proc. Natl. Acad. Sci. U.S.A.">
        <title>Identification of genes subject to positive selection in uropathogenic strains of Escherichia coli: a comparative genomics approach.</title>
        <authorList>
            <person name="Chen S.L."/>
            <person name="Hung C.-S."/>
            <person name="Xu J."/>
            <person name="Reigstad C.S."/>
            <person name="Magrini V."/>
            <person name="Sabo A."/>
            <person name="Blasiar D."/>
            <person name="Bieri T."/>
            <person name="Meyer R.R."/>
            <person name="Ozersky P."/>
            <person name="Armstrong J.R."/>
            <person name="Fulton R.S."/>
            <person name="Latreille J.P."/>
            <person name="Spieth J."/>
            <person name="Hooton T.M."/>
            <person name="Mardis E.R."/>
            <person name="Hultgren S.J."/>
            <person name="Gordon J.I."/>
        </authorList>
    </citation>
    <scope>NUCLEOTIDE SEQUENCE [LARGE SCALE GENOMIC DNA]</scope>
    <source>
        <strain>UTI89 / UPEC</strain>
    </source>
</reference>
<keyword id="KW-0997">Cell inner membrane</keyword>
<keyword id="KW-1003">Cell membrane</keyword>
<keyword id="KW-0460">Magnesium</keyword>
<keyword id="KW-0472">Membrane</keyword>
<keyword id="KW-0808">Transferase</keyword>
<keyword id="KW-0812">Transmembrane</keyword>
<keyword id="KW-1133">Transmembrane helix</keyword>
<keyword id="KW-0831">Ubiquinone biosynthesis</keyword>
<organism>
    <name type="scientific">Escherichia coli (strain UTI89 / UPEC)</name>
    <dbReference type="NCBI Taxonomy" id="364106"/>
    <lineage>
        <taxon>Bacteria</taxon>
        <taxon>Pseudomonadati</taxon>
        <taxon>Pseudomonadota</taxon>
        <taxon>Gammaproteobacteria</taxon>
        <taxon>Enterobacterales</taxon>
        <taxon>Enterobacteriaceae</taxon>
        <taxon>Escherichia</taxon>
    </lineage>
</organism>
<accession>Q1R3P6</accession>
<dbReference type="EC" id="2.5.1.39" evidence="1"/>
<dbReference type="EMBL" id="CP000243">
    <property type="protein sequence ID" value="ABE10018.1"/>
    <property type="molecule type" value="Genomic_DNA"/>
</dbReference>
<dbReference type="RefSeq" id="WP_000455225.1">
    <property type="nucleotide sequence ID" value="NZ_CP064825.1"/>
</dbReference>
<dbReference type="SMR" id="Q1R3P6"/>
<dbReference type="KEGG" id="eci:UTI89_C4610"/>
<dbReference type="HOGENOM" id="CLU_034879_1_0_6"/>
<dbReference type="UniPathway" id="UPA00232"/>
<dbReference type="Proteomes" id="UP000001952">
    <property type="component" value="Chromosome"/>
</dbReference>
<dbReference type="GO" id="GO:0005886">
    <property type="term" value="C:plasma membrane"/>
    <property type="evidence" value="ECO:0007669"/>
    <property type="project" value="UniProtKB-SubCell"/>
</dbReference>
<dbReference type="GO" id="GO:0008412">
    <property type="term" value="F:4-hydroxybenzoate polyprenyltransferase activity"/>
    <property type="evidence" value="ECO:0007669"/>
    <property type="project" value="UniProtKB-UniRule"/>
</dbReference>
<dbReference type="GO" id="GO:0006744">
    <property type="term" value="P:ubiquinone biosynthetic process"/>
    <property type="evidence" value="ECO:0007669"/>
    <property type="project" value="UniProtKB-UniRule"/>
</dbReference>
<dbReference type="CDD" id="cd13959">
    <property type="entry name" value="PT_UbiA_COQ2"/>
    <property type="match status" value="1"/>
</dbReference>
<dbReference type="FunFam" id="1.10.357.140:FF:000002">
    <property type="entry name" value="4-hydroxybenzoate octaprenyltransferase"/>
    <property type="match status" value="1"/>
</dbReference>
<dbReference type="FunFam" id="1.20.120.1780:FF:000001">
    <property type="entry name" value="4-hydroxybenzoate octaprenyltransferase"/>
    <property type="match status" value="1"/>
</dbReference>
<dbReference type="Gene3D" id="1.10.357.140">
    <property type="entry name" value="UbiA prenyltransferase"/>
    <property type="match status" value="1"/>
</dbReference>
<dbReference type="Gene3D" id="1.20.120.1780">
    <property type="entry name" value="UbiA prenyltransferase"/>
    <property type="match status" value="1"/>
</dbReference>
<dbReference type="HAMAP" id="MF_01635">
    <property type="entry name" value="UbiA"/>
    <property type="match status" value="1"/>
</dbReference>
<dbReference type="InterPro" id="IPR006370">
    <property type="entry name" value="HB_polyprenyltransferase-like"/>
</dbReference>
<dbReference type="InterPro" id="IPR039653">
    <property type="entry name" value="Prenyltransferase"/>
</dbReference>
<dbReference type="InterPro" id="IPR000537">
    <property type="entry name" value="UbiA_prenyltransferase"/>
</dbReference>
<dbReference type="InterPro" id="IPR030470">
    <property type="entry name" value="UbiA_prenylTrfase_CS"/>
</dbReference>
<dbReference type="InterPro" id="IPR044878">
    <property type="entry name" value="UbiA_sf"/>
</dbReference>
<dbReference type="NCBIfam" id="TIGR01474">
    <property type="entry name" value="ubiA_proteo"/>
    <property type="match status" value="1"/>
</dbReference>
<dbReference type="PANTHER" id="PTHR11048:SF28">
    <property type="entry name" value="4-HYDROXYBENZOATE POLYPRENYLTRANSFERASE, MITOCHONDRIAL"/>
    <property type="match status" value="1"/>
</dbReference>
<dbReference type="PANTHER" id="PTHR11048">
    <property type="entry name" value="PRENYLTRANSFERASES"/>
    <property type="match status" value="1"/>
</dbReference>
<dbReference type="Pfam" id="PF01040">
    <property type="entry name" value="UbiA"/>
    <property type="match status" value="1"/>
</dbReference>
<dbReference type="PROSITE" id="PS00943">
    <property type="entry name" value="UBIA"/>
    <property type="match status" value="1"/>
</dbReference>
<gene>
    <name evidence="1" type="primary">ubiA</name>
    <name type="ordered locus">UTI89_C4610</name>
</gene>
<name>UBIA_ECOUT</name>
<comment type="function">
    <text evidence="1">Catalyzes the prenylation of para-hydroxybenzoate (PHB) with an all-trans polyprenyl group. Mediates the second step in the final reaction sequence of ubiquinone-8 (UQ-8) biosynthesis, which is the condensation of the polyisoprenoid side chain with PHB, generating the first membrane-bound Q intermediate 3-octaprenyl-4-hydroxybenzoate.</text>
</comment>
<comment type="catalytic activity">
    <reaction evidence="1">
        <text>all-trans-octaprenyl diphosphate + 4-hydroxybenzoate = 4-hydroxy-3-(all-trans-octaprenyl)benzoate + diphosphate</text>
        <dbReference type="Rhea" id="RHEA:27782"/>
        <dbReference type="ChEBI" id="CHEBI:1617"/>
        <dbReference type="ChEBI" id="CHEBI:17879"/>
        <dbReference type="ChEBI" id="CHEBI:33019"/>
        <dbReference type="ChEBI" id="CHEBI:57711"/>
        <dbReference type="EC" id="2.5.1.39"/>
    </reaction>
</comment>
<comment type="cofactor">
    <cofactor evidence="1">
        <name>Mg(2+)</name>
        <dbReference type="ChEBI" id="CHEBI:18420"/>
    </cofactor>
</comment>
<comment type="pathway">
    <text evidence="1">Cofactor biosynthesis; ubiquinone biosynthesis.</text>
</comment>
<comment type="subcellular location">
    <subcellularLocation>
        <location evidence="1">Cell inner membrane</location>
        <topology evidence="1">Multi-pass membrane protein</topology>
    </subcellularLocation>
</comment>
<comment type="similarity">
    <text evidence="1">Belongs to the UbiA prenyltransferase family.</text>
</comment>